<name>RS13_DICT6</name>
<organism>
    <name type="scientific">Dictyoglomus thermophilum (strain ATCC 35947 / DSM 3960 / H-6-12)</name>
    <dbReference type="NCBI Taxonomy" id="309799"/>
    <lineage>
        <taxon>Bacteria</taxon>
        <taxon>Pseudomonadati</taxon>
        <taxon>Dictyoglomota</taxon>
        <taxon>Dictyoglomia</taxon>
        <taxon>Dictyoglomales</taxon>
        <taxon>Dictyoglomaceae</taxon>
        <taxon>Dictyoglomus</taxon>
    </lineage>
</organism>
<feature type="chain" id="PRO_1000141258" description="Small ribosomal subunit protein uS13">
    <location>
        <begin position="1"/>
        <end position="124"/>
    </location>
</feature>
<feature type="region of interest" description="Disordered" evidence="2">
    <location>
        <begin position="98"/>
        <end position="124"/>
    </location>
</feature>
<evidence type="ECO:0000255" key="1">
    <source>
        <dbReference type="HAMAP-Rule" id="MF_01315"/>
    </source>
</evidence>
<evidence type="ECO:0000256" key="2">
    <source>
        <dbReference type="SAM" id="MobiDB-lite"/>
    </source>
</evidence>
<evidence type="ECO:0000305" key="3"/>
<accession>B5YDW7</accession>
<gene>
    <name evidence="1" type="primary">rpsM</name>
    <name type="ordered locus">DICTH_0861</name>
</gene>
<reference key="1">
    <citation type="journal article" date="2014" name="Genome Announc.">
        <title>Complete Genome Sequence of the Extreme Thermophile Dictyoglomus thermophilum H-6-12.</title>
        <authorList>
            <person name="Coil D.A."/>
            <person name="Badger J.H."/>
            <person name="Forberger H.C."/>
            <person name="Riggs F."/>
            <person name="Madupu R."/>
            <person name="Fedorova N."/>
            <person name="Ward N."/>
            <person name="Robb F.T."/>
            <person name="Eisen J.A."/>
        </authorList>
    </citation>
    <scope>NUCLEOTIDE SEQUENCE [LARGE SCALE GENOMIC DNA]</scope>
    <source>
        <strain>ATCC 35947 / DSM 3960 / H-6-12</strain>
    </source>
</reference>
<protein>
    <recommendedName>
        <fullName evidence="1">Small ribosomal subunit protein uS13</fullName>
    </recommendedName>
    <alternativeName>
        <fullName evidence="3">30S ribosomal protein S13</fullName>
    </alternativeName>
</protein>
<dbReference type="EMBL" id="CP001146">
    <property type="protein sequence ID" value="ACI18553.1"/>
    <property type="molecule type" value="Genomic_DNA"/>
</dbReference>
<dbReference type="RefSeq" id="WP_012547185.1">
    <property type="nucleotide sequence ID" value="NC_011297.1"/>
</dbReference>
<dbReference type="SMR" id="B5YDW7"/>
<dbReference type="STRING" id="309799.DICTH_0861"/>
<dbReference type="PaxDb" id="309799-DICTH_0861"/>
<dbReference type="KEGG" id="dth:DICTH_0861"/>
<dbReference type="eggNOG" id="COG0099">
    <property type="taxonomic scope" value="Bacteria"/>
</dbReference>
<dbReference type="HOGENOM" id="CLU_103849_1_2_0"/>
<dbReference type="OrthoDB" id="9803610at2"/>
<dbReference type="Proteomes" id="UP000001733">
    <property type="component" value="Chromosome"/>
</dbReference>
<dbReference type="GO" id="GO:0005829">
    <property type="term" value="C:cytosol"/>
    <property type="evidence" value="ECO:0007669"/>
    <property type="project" value="TreeGrafter"/>
</dbReference>
<dbReference type="GO" id="GO:0015935">
    <property type="term" value="C:small ribosomal subunit"/>
    <property type="evidence" value="ECO:0007669"/>
    <property type="project" value="TreeGrafter"/>
</dbReference>
<dbReference type="GO" id="GO:0019843">
    <property type="term" value="F:rRNA binding"/>
    <property type="evidence" value="ECO:0007669"/>
    <property type="project" value="UniProtKB-UniRule"/>
</dbReference>
<dbReference type="GO" id="GO:0003735">
    <property type="term" value="F:structural constituent of ribosome"/>
    <property type="evidence" value="ECO:0007669"/>
    <property type="project" value="InterPro"/>
</dbReference>
<dbReference type="GO" id="GO:0000049">
    <property type="term" value="F:tRNA binding"/>
    <property type="evidence" value="ECO:0007669"/>
    <property type="project" value="UniProtKB-UniRule"/>
</dbReference>
<dbReference type="GO" id="GO:0006412">
    <property type="term" value="P:translation"/>
    <property type="evidence" value="ECO:0007669"/>
    <property type="project" value="UniProtKB-UniRule"/>
</dbReference>
<dbReference type="FunFam" id="1.10.8.50:FF:000001">
    <property type="entry name" value="30S ribosomal protein S13"/>
    <property type="match status" value="1"/>
</dbReference>
<dbReference type="FunFam" id="4.10.910.10:FF:000001">
    <property type="entry name" value="30S ribosomal protein S13"/>
    <property type="match status" value="1"/>
</dbReference>
<dbReference type="Gene3D" id="1.10.8.50">
    <property type="match status" value="1"/>
</dbReference>
<dbReference type="Gene3D" id="4.10.910.10">
    <property type="entry name" value="30s ribosomal protein s13, domain 2"/>
    <property type="match status" value="1"/>
</dbReference>
<dbReference type="HAMAP" id="MF_01315">
    <property type="entry name" value="Ribosomal_uS13"/>
    <property type="match status" value="1"/>
</dbReference>
<dbReference type="InterPro" id="IPR027437">
    <property type="entry name" value="Rbsml_uS13_C"/>
</dbReference>
<dbReference type="InterPro" id="IPR001892">
    <property type="entry name" value="Ribosomal_uS13"/>
</dbReference>
<dbReference type="InterPro" id="IPR010979">
    <property type="entry name" value="Ribosomal_uS13-like_H2TH"/>
</dbReference>
<dbReference type="InterPro" id="IPR019980">
    <property type="entry name" value="Ribosomal_uS13_bac-type"/>
</dbReference>
<dbReference type="InterPro" id="IPR018269">
    <property type="entry name" value="Ribosomal_uS13_CS"/>
</dbReference>
<dbReference type="NCBIfam" id="TIGR03631">
    <property type="entry name" value="uS13_bact"/>
    <property type="match status" value="1"/>
</dbReference>
<dbReference type="PANTHER" id="PTHR10871">
    <property type="entry name" value="30S RIBOSOMAL PROTEIN S13/40S RIBOSOMAL PROTEIN S18"/>
    <property type="match status" value="1"/>
</dbReference>
<dbReference type="PANTHER" id="PTHR10871:SF1">
    <property type="entry name" value="SMALL RIBOSOMAL SUBUNIT PROTEIN US13M"/>
    <property type="match status" value="1"/>
</dbReference>
<dbReference type="Pfam" id="PF00416">
    <property type="entry name" value="Ribosomal_S13"/>
    <property type="match status" value="1"/>
</dbReference>
<dbReference type="PIRSF" id="PIRSF002134">
    <property type="entry name" value="Ribosomal_S13"/>
    <property type="match status" value="1"/>
</dbReference>
<dbReference type="SUPFAM" id="SSF46946">
    <property type="entry name" value="S13-like H2TH domain"/>
    <property type="match status" value="1"/>
</dbReference>
<dbReference type="PROSITE" id="PS00646">
    <property type="entry name" value="RIBOSOMAL_S13_1"/>
    <property type="match status" value="1"/>
</dbReference>
<dbReference type="PROSITE" id="PS50159">
    <property type="entry name" value="RIBOSOMAL_S13_2"/>
    <property type="match status" value="1"/>
</dbReference>
<sequence>MARIAGVDLPSNKKIEIALTYIYGIGRTTSKKILQATGVDPNKRVKDLTEEEISKLREEIENNYKVEGDLRQEVAANIRRLIEIGCYRGIRHKRGLPVRGQRTRCNARTRKGPRKTVGAKRKEK</sequence>
<comment type="function">
    <text evidence="1">Located at the top of the head of the 30S subunit, it contacts several helices of the 16S rRNA. In the 70S ribosome it contacts the 23S rRNA (bridge B1a) and protein L5 of the 50S subunit (bridge B1b), connecting the 2 subunits; these bridges are implicated in subunit movement. Contacts the tRNAs in the A and P-sites.</text>
</comment>
<comment type="subunit">
    <text evidence="1">Part of the 30S ribosomal subunit. Forms a loose heterodimer with protein S19. Forms two bridges to the 50S subunit in the 70S ribosome.</text>
</comment>
<comment type="similarity">
    <text evidence="1">Belongs to the universal ribosomal protein uS13 family.</text>
</comment>
<proteinExistence type="inferred from homology"/>
<keyword id="KW-0687">Ribonucleoprotein</keyword>
<keyword id="KW-0689">Ribosomal protein</keyword>
<keyword id="KW-0694">RNA-binding</keyword>
<keyword id="KW-0699">rRNA-binding</keyword>
<keyword id="KW-0820">tRNA-binding</keyword>